<feature type="chain" id="PRO_0000071111" description="Mitochondrial import inner membrane translocase subunit TIM14">
    <location>
        <begin position="1"/>
        <end position="172"/>
    </location>
</feature>
<feature type="topological domain" description="Mitochondrial intermembrane" evidence="2">
    <location>
        <begin position="1"/>
        <end position="71"/>
    </location>
</feature>
<feature type="transmembrane region" description="Helical" evidence="2">
    <location>
        <begin position="72"/>
        <end position="89"/>
    </location>
</feature>
<feature type="topological domain" description="Mitochondrial matrix" evidence="2">
    <location>
        <begin position="90"/>
        <end position="172"/>
    </location>
</feature>
<feature type="domain" description="J" evidence="3">
    <location>
        <begin position="114"/>
        <end position="172"/>
    </location>
</feature>
<feature type="region of interest" description="Disordered" evidence="4">
    <location>
        <begin position="1"/>
        <end position="48"/>
    </location>
</feature>
<feature type="compositionally biased region" description="Low complexity" evidence="4">
    <location>
        <begin position="26"/>
        <end position="41"/>
    </location>
</feature>
<accession>Q6BH37</accession>
<name>TIM14_DEBHA</name>
<protein>
    <recommendedName>
        <fullName>Mitochondrial import inner membrane translocase subunit TIM14</fullName>
    </recommendedName>
    <alternativeName>
        <fullName>Presequence translocated-associated motor subunit PAM18</fullName>
    </alternativeName>
</protein>
<sequence length="172" mass="19094">MAPFNMDIPTLAIPGDRNQSQAIELSQQAQQPQQPQQSQQAYTGHLQRKQADEGSAEYYFDKGCEWMGNHPWMTGMGVLGVAYFASGFVKSKQPGINGKAFVKGPFGQKMTPKEALQILNLKETNLSQAKLKEQHRKLMMANHPDKGGSSYLATKVNEAKDILEKRGGLKKK</sequence>
<dbReference type="EMBL" id="CR382139">
    <property type="protein sequence ID" value="CAG90994.2"/>
    <property type="molecule type" value="Genomic_DNA"/>
</dbReference>
<dbReference type="RefSeq" id="XP_462484.2">
    <property type="nucleotide sequence ID" value="XM_462484.1"/>
</dbReference>
<dbReference type="SMR" id="Q6BH37"/>
<dbReference type="FunCoup" id="Q6BH37">
    <property type="interactions" value="43"/>
</dbReference>
<dbReference type="STRING" id="284592.Q6BH37"/>
<dbReference type="GeneID" id="2905434"/>
<dbReference type="KEGG" id="dha:DEHA2G21648g"/>
<dbReference type="VEuPathDB" id="FungiDB:DEHA2G21648g"/>
<dbReference type="eggNOG" id="KOG0723">
    <property type="taxonomic scope" value="Eukaryota"/>
</dbReference>
<dbReference type="HOGENOM" id="CLU_017633_13_0_1"/>
<dbReference type="InParanoid" id="Q6BH37"/>
<dbReference type="OMA" id="EGSAEWY"/>
<dbReference type="OrthoDB" id="240298at2759"/>
<dbReference type="Proteomes" id="UP000000599">
    <property type="component" value="Chromosome G"/>
</dbReference>
<dbReference type="GO" id="GO:0001405">
    <property type="term" value="C:PAM complex, Tim23 associated import motor"/>
    <property type="evidence" value="ECO:0007669"/>
    <property type="project" value="EnsemblFungi"/>
</dbReference>
<dbReference type="GO" id="GO:0001671">
    <property type="term" value="F:ATPase activator activity"/>
    <property type="evidence" value="ECO:0007669"/>
    <property type="project" value="EnsemblFungi"/>
</dbReference>
<dbReference type="GO" id="GO:0030150">
    <property type="term" value="P:protein import into mitochondrial matrix"/>
    <property type="evidence" value="ECO:0007669"/>
    <property type="project" value="EnsemblFungi"/>
</dbReference>
<dbReference type="CDD" id="cd06257">
    <property type="entry name" value="DnaJ"/>
    <property type="match status" value="1"/>
</dbReference>
<dbReference type="FunFam" id="1.10.287.110:FF:000001">
    <property type="entry name" value="Import inner membrane translocase subunit tim14"/>
    <property type="match status" value="1"/>
</dbReference>
<dbReference type="Gene3D" id="1.10.287.110">
    <property type="entry name" value="DnaJ domain"/>
    <property type="match status" value="1"/>
</dbReference>
<dbReference type="InterPro" id="IPR001623">
    <property type="entry name" value="DnaJ_domain"/>
</dbReference>
<dbReference type="InterPro" id="IPR036869">
    <property type="entry name" value="J_dom_sf"/>
</dbReference>
<dbReference type="PANTHER" id="PTHR12763">
    <property type="match status" value="1"/>
</dbReference>
<dbReference type="PANTHER" id="PTHR12763:SF28">
    <property type="entry name" value="GEO10507P1-RELATED"/>
    <property type="match status" value="1"/>
</dbReference>
<dbReference type="Pfam" id="PF03656">
    <property type="entry name" value="Pam16"/>
    <property type="match status" value="1"/>
</dbReference>
<dbReference type="SMART" id="SM00271">
    <property type="entry name" value="DnaJ"/>
    <property type="match status" value="1"/>
</dbReference>
<dbReference type="SUPFAM" id="SSF46565">
    <property type="entry name" value="Chaperone J-domain"/>
    <property type="match status" value="1"/>
</dbReference>
<dbReference type="PROSITE" id="PS50076">
    <property type="entry name" value="DNAJ_2"/>
    <property type="match status" value="1"/>
</dbReference>
<comment type="function">
    <text evidence="1">Essential component of the PAM complex, a complex required for the translocation of transit peptide-containing proteins from the inner membrane into the mitochondrial matrix in an ATP-dependent manner. In the complex, it is required to stimulate activity of mtHSP70 (SSC1) (By similarity).</text>
</comment>
<comment type="subunit">
    <text evidence="1">Heterodimer with PAM16. Component of the PAM complex, at least composed of mtHsp70, MGE1, TIM44, PAM16, PAM17 and PAM18 (By similarity).</text>
</comment>
<comment type="subcellular location">
    <subcellularLocation>
        <location evidence="1">Mitochondrion inner membrane</location>
        <topology evidence="1">Single-pass membrane protein</topology>
    </subcellularLocation>
</comment>
<comment type="domain">
    <text evidence="1">The J domain is essential for co-chaperone activity and mediates the heterodimerization with the J-like domain of PAM16.</text>
</comment>
<comment type="similarity">
    <text evidence="5">Belongs to the TIM14 family.</text>
</comment>
<proteinExistence type="inferred from homology"/>
<keyword id="KW-0143">Chaperone</keyword>
<keyword id="KW-0472">Membrane</keyword>
<keyword id="KW-0496">Mitochondrion</keyword>
<keyword id="KW-0999">Mitochondrion inner membrane</keyword>
<keyword id="KW-0653">Protein transport</keyword>
<keyword id="KW-1185">Reference proteome</keyword>
<keyword id="KW-0811">Translocation</keyword>
<keyword id="KW-0812">Transmembrane</keyword>
<keyword id="KW-1133">Transmembrane helix</keyword>
<keyword id="KW-0813">Transport</keyword>
<evidence type="ECO:0000250" key="1"/>
<evidence type="ECO:0000255" key="2"/>
<evidence type="ECO:0000255" key="3">
    <source>
        <dbReference type="PROSITE-ProRule" id="PRU00286"/>
    </source>
</evidence>
<evidence type="ECO:0000256" key="4">
    <source>
        <dbReference type="SAM" id="MobiDB-lite"/>
    </source>
</evidence>
<evidence type="ECO:0000305" key="5"/>
<organism>
    <name type="scientific">Debaryomyces hansenii (strain ATCC 36239 / CBS 767 / BCRC 21394 / JCM 1990 / NBRC 0083 / IGC 2968)</name>
    <name type="common">Yeast</name>
    <name type="synonym">Torulaspora hansenii</name>
    <dbReference type="NCBI Taxonomy" id="284592"/>
    <lineage>
        <taxon>Eukaryota</taxon>
        <taxon>Fungi</taxon>
        <taxon>Dikarya</taxon>
        <taxon>Ascomycota</taxon>
        <taxon>Saccharomycotina</taxon>
        <taxon>Pichiomycetes</taxon>
        <taxon>Debaryomycetaceae</taxon>
        <taxon>Debaryomyces</taxon>
    </lineage>
</organism>
<gene>
    <name type="primary">PAM18</name>
    <name type="synonym">TIM14</name>
    <name type="ordered locus">DEHA2G21648g</name>
</gene>
<reference key="1">
    <citation type="journal article" date="2004" name="Nature">
        <title>Genome evolution in yeasts.</title>
        <authorList>
            <person name="Dujon B."/>
            <person name="Sherman D."/>
            <person name="Fischer G."/>
            <person name="Durrens P."/>
            <person name="Casaregola S."/>
            <person name="Lafontaine I."/>
            <person name="de Montigny J."/>
            <person name="Marck C."/>
            <person name="Neuveglise C."/>
            <person name="Talla E."/>
            <person name="Goffard N."/>
            <person name="Frangeul L."/>
            <person name="Aigle M."/>
            <person name="Anthouard V."/>
            <person name="Babour A."/>
            <person name="Barbe V."/>
            <person name="Barnay S."/>
            <person name="Blanchin S."/>
            <person name="Beckerich J.-M."/>
            <person name="Beyne E."/>
            <person name="Bleykasten C."/>
            <person name="Boisrame A."/>
            <person name="Boyer J."/>
            <person name="Cattolico L."/>
            <person name="Confanioleri F."/>
            <person name="de Daruvar A."/>
            <person name="Despons L."/>
            <person name="Fabre E."/>
            <person name="Fairhead C."/>
            <person name="Ferry-Dumazet H."/>
            <person name="Groppi A."/>
            <person name="Hantraye F."/>
            <person name="Hennequin C."/>
            <person name="Jauniaux N."/>
            <person name="Joyet P."/>
            <person name="Kachouri R."/>
            <person name="Kerrest A."/>
            <person name="Koszul R."/>
            <person name="Lemaire M."/>
            <person name="Lesur I."/>
            <person name="Ma L."/>
            <person name="Muller H."/>
            <person name="Nicaud J.-M."/>
            <person name="Nikolski M."/>
            <person name="Oztas S."/>
            <person name="Ozier-Kalogeropoulos O."/>
            <person name="Pellenz S."/>
            <person name="Potier S."/>
            <person name="Richard G.-F."/>
            <person name="Straub M.-L."/>
            <person name="Suleau A."/>
            <person name="Swennen D."/>
            <person name="Tekaia F."/>
            <person name="Wesolowski-Louvel M."/>
            <person name="Westhof E."/>
            <person name="Wirth B."/>
            <person name="Zeniou-Meyer M."/>
            <person name="Zivanovic Y."/>
            <person name="Bolotin-Fukuhara M."/>
            <person name="Thierry A."/>
            <person name="Bouchier C."/>
            <person name="Caudron B."/>
            <person name="Scarpelli C."/>
            <person name="Gaillardin C."/>
            <person name="Weissenbach J."/>
            <person name="Wincker P."/>
            <person name="Souciet J.-L."/>
        </authorList>
    </citation>
    <scope>NUCLEOTIDE SEQUENCE [LARGE SCALE GENOMIC DNA]</scope>
    <source>
        <strain>ATCC 36239 / CBS 767 / BCRC 21394 / JCM 1990 / NBRC 0083 / IGC 2968</strain>
    </source>
</reference>